<gene>
    <name type="primary">ptsG</name>
    <name type="synonym">glcA</name>
    <name type="ordered locus">MW0163</name>
</gene>
<reference key="1">
    <citation type="journal article" date="2002" name="Lancet">
        <title>Genome and virulence determinants of high virulence community-acquired MRSA.</title>
        <authorList>
            <person name="Baba T."/>
            <person name="Takeuchi F."/>
            <person name="Kuroda M."/>
            <person name="Yuzawa H."/>
            <person name="Aoki K."/>
            <person name="Oguchi A."/>
            <person name="Nagai Y."/>
            <person name="Iwama N."/>
            <person name="Asano K."/>
            <person name="Naimi T."/>
            <person name="Kuroda H."/>
            <person name="Cui L."/>
            <person name="Yamamoto K."/>
            <person name="Hiramatsu K."/>
        </authorList>
    </citation>
    <scope>NUCLEOTIDE SEQUENCE [LARGE SCALE GENOMIC DNA]</scope>
    <source>
        <strain>MW2</strain>
    </source>
</reference>
<sequence>MRKKLFGQLQRIGKALMLPVAILPAAGLLLAIGTAMQGESLQHYLPFIQNGGVQTVAKLMTGAGGIIFDNLPMIFALGVAIGLAGGDGVAAIAAFVGYIIMNKTMGDFLQVTPKNIGDPASGYASILGIPTLQTGVFGGIIIGALAAWCYNKFYNINLPSYLGFFAGKRFVPIMMATTSFILAFPMALIWPTIQSGLNAFSTGLLDSNTGVAVFLFGFIKRLLIPFGLHHIFHAPFWFEFGSWKNAAGEIIHGDQRIFIEQIREGAHLTAGKFMQGEFPVMMFGLPAAALAIYHTAKPENKKVVAGLMGSAALTSFLTGITEPLEFSFLFVAPLLFFIHAVLDGLSFLTLYLLDLHLGYTFSGGFIDYFLLGILPNKTQWWLVIPVGLVYAVIYYFVFRFLIVKLKYKTPGREDKQSQAATASATELPYAVLEAMGGKANIKHLDACITRLRVEVNDKSKVDVPGLKDLGASGVLEVGNNMQAIFGPKSDQIKHEMQQIMNGQVVENPTTMEDDKDETVVVAEDKSATSELSHIVHAPLTGEVTPLSEVPDQVFSEKMMGDGIAIKPSQGEVRAPFNGKVQMIFPTKHAIGLVSDSGLELLIHIGLDTVKLNGEGFTLHVEEGQEVKQGDLLINFDLDYIRNHAKSDITPIIVTQGNITNLDFKQGEHGNISFGDQLFEAK</sequence>
<keyword id="KW-1003">Cell membrane</keyword>
<keyword id="KW-0418">Kinase</keyword>
<keyword id="KW-0472">Membrane</keyword>
<keyword id="KW-0598">Phosphotransferase system</keyword>
<keyword id="KW-0762">Sugar transport</keyword>
<keyword id="KW-0808">Transferase</keyword>
<keyword id="KW-0812">Transmembrane</keyword>
<keyword id="KW-1133">Transmembrane helix</keyword>
<keyword id="KW-0813">Transport</keyword>
<feature type="chain" id="PRO_0000351400" description="PTS system glucose-specific EIICBA component">
    <location>
        <begin position="1"/>
        <end position="681"/>
    </location>
</feature>
<feature type="transmembrane region" description="Helical" evidence="4">
    <location>
        <begin position="16"/>
        <end position="36"/>
    </location>
</feature>
<feature type="transmembrane region" description="Helical" evidence="4">
    <location>
        <begin position="73"/>
        <end position="93"/>
    </location>
</feature>
<feature type="transmembrane region" description="Helical" evidence="4">
    <location>
        <begin position="126"/>
        <end position="146"/>
    </location>
</feature>
<feature type="transmembrane region" description="Helical" evidence="4">
    <location>
        <begin position="170"/>
        <end position="190"/>
    </location>
</feature>
<feature type="transmembrane region" description="Helical" evidence="4">
    <location>
        <begin position="199"/>
        <end position="219"/>
    </location>
</feature>
<feature type="transmembrane region" description="Helical" evidence="4">
    <location>
        <begin position="273"/>
        <end position="293"/>
    </location>
</feature>
<feature type="transmembrane region" description="Helical" evidence="4">
    <location>
        <begin position="303"/>
        <end position="323"/>
    </location>
</feature>
<feature type="transmembrane region" description="Helical" evidence="4">
    <location>
        <begin position="328"/>
        <end position="348"/>
    </location>
</feature>
<feature type="transmembrane region" description="Helical" evidence="4">
    <location>
        <begin position="355"/>
        <end position="375"/>
    </location>
</feature>
<feature type="transmembrane region" description="Helical" evidence="4">
    <location>
        <begin position="383"/>
        <end position="403"/>
    </location>
</feature>
<feature type="domain" description="PTS EIIC type-1" evidence="4">
    <location>
        <begin position="3"/>
        <end position="414"/>
    </location>
</feature>
<feature type="domain" description="PTS EIIB type-1" evidence="3">
    <location>
        <begin position="425"/>
        <end position="506"/>
    </location>
</feature>
<feature type="domain" description="PTS EIIA type-1" evidence="2">
    <location>
        <begin position="551"/>
        <end position="655"/>
    </location>
</feature>
<feature type="active site" description="Phosphocysteine intermediate; for EIIB activity" evidence="3">
    <location>
        <position position="447"/>
    </location>
</feature>
<feature type="active site" description="Tele-phosphohistidine intermediate; for EIIA activity" evidence="2">
    <location>
        <position position="603"/>
    </location>
</feature>
<organism>
    <name type="scientific">Staphylococcus aureus (strain MW2)</name>
    <dbReference type="NCBI Taxonomy" id="196620"/>
    <lineage>
        <taxon>Bacteria</taxon>
        <taxon>Bacillati</taxon>
        <taxon>Bacillota</taxon>
        <taxon>Bacilli</taxon>
        <taxon>Bacillales</taxon>
        <taxon>Staphylococcaceae</taxon>
        <taxon>Staphylococcus</taxon>
    </lineage>
</organism>
<dbReference type="EC" id="2.7.1.199" evidence="1"/>
<dbReference type="EMBL" id="BA000033">
    <property type="protein sequence ID" value="BAB94028.1"/>
    <property type="molecule type" value="Genomic_DNA"/>
</dbReference>
<dbReference type="RefSeq" id="WP_001227724.1">
    <property type="nucleotide sequence ID" value="NC_003923.1"/>
</dbReference>
<dbReference type="SMR" id="Q8NYM1"/>
<dbReference type="KEGG" id="sam:MW0163"/>
<dbReference type="HOGENOM" id="CLU_012312_1_1_9"/>
<dbReference type="GO" id="GO:0005886">
    <property type="term" value="C:plasma membrane"/>
    <property type="evidence" value="ECO:0007669"/>
    <property type="project" value="UniProtKB-SubCell"/>
</dbReference>
<dbReference type="GO" id="GO:0055056">
    <property type="term" value="F:D-glucose transmembrane transporter activity"/>
    <property type="evidence" value="ECO:0007669"/>
    <property type="project" value="InterPro"/>
</dbReference>
<dbReference type="GO" id="GO:0016301">
    <property type="term" value="F:kinase activity"/>
    <property type="evidence" value="ECO:0007669"/>
    <property type="project" value="UniProtKB-KW"/>
</dbReference>
<dbReference type="GO" id="GO:0008982">
    <property type="term" value="F:protein-N(PI)-phosphohistidine-sugar phosphotransferase activity"/>
    <property type="evidence" value="ECO:0007669"/>
    <property type="project" value="InterPro"/>
</dbReference>
<dbReference type="GO" id="GO:0090563">
    <property type="term" value="F:protein-phosphocysteine-sugar phosphotransferase activity"/>
    <property type="evidence" value="ECO:0007669"/>
    <property type="project" value="TreeGrafter"/>
</dbReference>
<dbReference type="GO" id="GO:1904659">
    <property type="term" value="P:D-glucose transmembrane transport"/>
    <property type="evidence" value="ECO:0007669"/>
    <property type="project" value="InterPro"/>
</dbReference>
<dbReference type="GO" id="GO:0009401">
    <property type="term" value="P:phosphoenolpyruvate-dependent sugar phosphotransferase system"/>
    <property type="evidence" value="ECO:0007669"/>
    <property type="project" value="UniProtKB-KW"/>
</dbReference>
<dbReference type="CDD" id="cd00210">
    <property type="entry name" value="PTS_IIA_glc"/>
    <property type="match status" value="1"/>
</dbReference>
<dbReference type="CDD" id="cd00212">
    <property type="entry name" value="PTS_IIB_glc"/>
    <property type="match status" value="1"/>
</dbReference>
<dbReference type="FunFam" id="2.70.70.10:FF:000001">
    <property type="entry name" value="PTS system glucose-specific IIA component"/>
    <property type="match status" value="1"/>
</dbReference>
<dbReference type="FunFam" id="3.30.1360.60:FF:000001">
    <property type="entry name" value="PTS system glucose-specific IIBC component PtsG"/>
    <property type="match status" value="1"/>
</dbReference>
<dbReference type="Gene3D" id="2.70.70.10">
    <property type="entry name" value="Glucose Permease (Domain IIA)"/>
    <property type="match status" value="1"/>
</dbReference>
<dbReference type="Gene3D" id="3.30.1360.60">
    <property type="entry name" value="Glucose permease domain IIB"/>
    <property type="match status" value="1"/>
</dbReference>
<dbReference type="InterPro" id="IPR011055">
    <property type="entry name" value="Dup_hybrid_motif"/>
</dbReference>
<dbReference type="InterPro" id="IPR036878">
    <property type="entry name" value="Glu_permease_IIB"/>
</dbReference>
<dbReference type="InterPro" id="IPR018113">
    <property type="entry name" value="PTrfase_EIIB_Cys"/>
</dbReference>
<dbReference type="InterPro" id="IPR001127">
    <property type="entry name" value="PTS_EIIA_1_perm"/>
</dbReference>
<dbReference type="InterPro" id="IPR003352">
    <property type="entry name" value="PTS_EIIC"/>
</dbReference>
<dbReference type="InterPro" id="IPR013013">
    <property type="entry name" value="PTS_EIIC_1"/>
</dbReference>
<dbReference type="InterPro" id="IPR050429">
    <property type="entry name" value="PTS_Glucose_EIICBA"/>
</dbReference>
<dbReference type="InterPro" id="IPR001996">
    <property type="entry name" value="PTS_IIB_1"/>
</dbReference>
<dbReference type="InterPro" id="IPR011299">
    <property type="entry name" value="PTS_IIBC_glc"/>
</dbReference>
<dbReference type="NCBIfam" id="TIGR00826">
    <property type="entry name" value="EIIB_glc"/>
    <property type="match status" value="1"/>
</dbReference>
<dbReference type="NCBIfam" id="TIGR00830">
    <property type="entry name" value="PTBA"/>
    <property type="match status" value="1"/>
</dbReference>
<dbReference type="NCBIfam" id="TIGR02002">
    <property type="entry name" value="PTS-II-BC-glcB"/>
    <property type="match status" value="1"/>
</dbReference>
<dbReference type="PANTHER" id="PTHR30009">
    <property type="entry name" value="CYTOCHROME C-TYPE SYNTHESIS PROTEIN AND PTS TRANSMEMBRANE COMPONENT"/>
    <property type="match status" value="1"/>
</dbReference>
<dbReference type="PANTHER" id="PTHR30009:SF20">
    <property type="entry name" value="PTS SYSTEM GLUCOSE-SPECIFIC EIICB COMPONENT-RELATED"/>
    <property type="match status" value="1"/>
</dbReference>
<dbReference type="Pfam" id="PF00358">
    <property type="entry name" value="PTS_EIIA_1"/>
    <property type="match status" value="1"/>
</dbReference>
<dbReference type="Pfam" id="PF00367">
    <property type="entry name" value="PTS_EIIB"/>
    <property type="match status" value="1"/>
</dbReference>
<dbReference type="Pfam" id="PF02378">
    <property type="entry name" value="PTS_EIIC"/>
    <property type="match status" value="1"/>
</dbReference>
<dbReference type="SUPFAM" id="SSF51261">
    <property type="entry name" value="Duplicated hybrid motif"/>
    <property type="match status" value="1"/>
</dbReference>
<dbReference type="SUPFAM" id="SSF55604">
    <property type="entry name" value="Glucose permease domain IIB"/>
    <property type="match status" value="1"/>
</dbReference>
<dbReference type="PROSITE" id="PS51093">
    <property type="entry name" value="PTS_EIIA_TYPE_1"/>
    <property type="match status" value="1"/>
</dbReference>
<dbReference type="PROSITE" id="PS00371">
    <property type="entry name" value="PTS_EIIA_TYPE_1_HIS"/>
    <property type="match status" value="1"/>
</dbReference>
<dbReference type="PROSITE" id="PS51098">
    <property type="entry name" value="PTS_EIIB_TYPE_1"/>
    <property type="match status" value="1"/>
</dbReference>
<dbReference type="PROSITE" id="PS01035">
    <property type="entry name" value="PTS_EIIB_TYPE_1_CYS"/>
    <property type="match status" value="1"/>
</dbReference>
<dbReference type="PROSITE" id="PS51103">
    <property type="entry name" value="PTS_EIIC_TYPE_1"/>
    <property type="match status" value="1"/>
</dbReference>
<accession>Q8NYM1</accession>
<protein>
    <recommendedName>
        <fullName evidence="1">PTS system glucose-specific EIICBA component</fullName>
        <ecNumber evidence="1">2.7.1.199</ecNumber>
    </recommendedName>
    <alternativeName>
        <fullName evidence="1">EIICBA-Glc</fullName>
        <shortName evidence="1">EII-Glc</shortName>
    </alternativeName>
    <alternativeName>
        <fullName evidence="5">EIICBA-Glc 1</fullName>
    </alternativeName>
    <domain>
        <recommendedName>
            <fullName evidence="1">Glucose permease IIC component</fullName>
        </recommendedName>
        <alternativeName>
            <fullName evidence="1">PTS system glucose-specific EIIC component</fullName>
        </alternativeName>
    </domain>
    <domain>
        <recommendedName>
            <fullName evidence="1">Glucose-specific phosphotransferase enzyme IIB component</fullName>
        </recommendedName>
        <alternativeName>
            <fullName evidence="1">PTS system glucose-specific EIIB component</fullName>
        </alternativeName>
    </domain>
    <domain>
        <recommendedName>
            <fullName evidence="1">Glucose-specific phosphotransferase enzyme IIA component</fullName>
        </recommendedName>
        <alternativeName>
            <fullName evidence="1">PTS system glucose-specific EIIA component</fullName>
        </alternativeName>
    </domain>
</protein>
<evidence type="ECO:0000250" key="1">
    <source>
        <dbReference type="UniProtKB" id="Q57071"/>
    </source>
</evidence>
<evidence type="ECO:0000255" key="2">
    <source>
        <dbReference type="PROSITE-ProRule" id="PRU00416"/>
    </source>
</evidence>
<evidence type="ECO:0000255" key="3">
    <source>
        <dbReference type="PROSITE-ProRule" id="PRU00421"/>
    </source>
</evidence>
<evidence type="ECO:0000255" key="4">
    <source>
        <dbReference type="PROSITE-ProRule" id="PRU00426"/>
    </source>
</evidence>
<evidence type="ECO:0000305" key="5"/>
<comment type="function">
    <text evidence="1">The phosphoenolpyruvate-dependent sugar phosphotransferase system (sugar PTS), a major carbohydrate active transport system, catalyzes the phosphorylation of incoming sugar substrates concomitantly with their translocation across the cell membrane. This system is involved in glucose transport.</text>
</comment>
<comment type="catalytic activity">
    <reaction evidence="1">
        <text>N(pros)-phospho-L-histidyl-[protein] + D-glucose(out) = D-glucose 6-phosphate(in) + L-histidyl-[protein]</text>
        <dbReference type="Rhea" id="RHEA:33367"/>
        <dbReference type="Rhea" id="RHEA-COMP:9745"/>
        <dbReference type="Rhea" id="RHEA-COMP:9746"/>
        <dbReference type="ChEBI" id="CHEBI:4167"/>
        <dbReference type="ChEBI" id="CHEBI:29979"/>
        <dbReference type="ChEBI" id="CHEBI:61548"/>
        <dbReference type="ChEBI" id="CHEBI:64837"/>
        <dbReference type="EC" id="2.7.1.199"/>
    </reaction>
</comment>
<comment type="subcellular location">
    <subcellularLocation>
        <location evidence="4">Cell membrane</location>
        <topology evidence="4">Multi-pass membrane protein</topology>
    </subcellularLocation>
</comment>
<comment type="domain">
    <text evidence="4">The EIIC domain forms the PTS system translocation channel and contains the specific substrate-binding site.</text>
</comment>
<comment type="domain">
    <text evidence="3">The EIIB domain is phosphorylated by phospho-EIIA on a cysteinyl or histidyl residue, depending on the transported sugar. Then, it transfers the phosphoryl group to the sugar substrate concomitantly with the sugar uptake processed by the EIIC domain.</text>
</comment>
<comment type="domain">
    <text evidence="2">The EIIA domain is phosphorylated by phospho-HPr on a histidyl residue. Then, it transfers the phosphoryl group to the EIIB domain.</text>
</comment>
<name>PTG3C_STAAW</name>
<proteinExistence type="inferred from homology"/>